<dbReference type="EMBL" id="CP000609">
    <property type="protein sequence ID" value="ABO35491.1"/>
    <property type="molecule type" value="Genomic_DNA"/>
</dbReference>
<dbReference type="RefSeq" id="WP_011868944.1">
    <property type="nucleotide sequence ID" value="NC_009135.1"/>
</dbReference>
<dbReference type="SMR" id="A4FZ57"/>
<dbReference type="STRING" id="402880.MmarC5_1193"/>
<dbReference type="GeneID" id="4928857"/>
<dbReference type="KEGG" id="mmq:MmarC5_1193"/>
<dbReference type="eggNOG" id="arCOG04183">
    <property type="taxonomic scope" value="Archaea"/>
</dbReference>
<dbReference type="HOGENOM" id="CLU_179743_2_0_2"/>
<dbReference type="OrthoDB" id="25142at2157"/>
<dbReference type="Proteomes" id="UP000000253">
    <property type="component" value="Chromosome"/>
</dbReference>
<dbReference type="GO" id="GO:1990904">
    <property type="term" value="C:ribonucleoprotein complex"/>
    <property type="evidence" value="ECO:0007669"/>
    <property type="project" value="UniProtKB-KW"/>
</dbReference>
<dbReference type="GO" id="GO:0005840">
    <property type="term" value="C:ribosome"/>
    <property type="evidence" value="ECO:0007669"/>
    <property type="project" value="UniProtKB-KW"/>
</dbReference>
<dbReference type="GO" id="GO:0003735">
    <property type="term" value="F:structural constituent of ribosome"/>
    <property type="evidence" value="ECO:0007669"/>
    <property type="project" value="InterPro"/>
</dbReference>
<dbReference type="GO" id="GO:0008270">
    <property type="term" value="F:zinc ion binding"/>
    <property type="evidence" value="ECO:0007669"/>
    <property type="project" value="UniProtKB-UniRule"/>
</dbReference>
<dbReference type="GO" id="GO:0006412">
    <property type="term" value="P:translation"/>
    <property type="evidence" value="ECO:0007669"/>
    <property type="project" value="UniProtKB-UniRule"/>
</dbReference>
<dbReference type="Gene3D" id="6.20.50.180">
    <property type="match status" value="1"/>
</dbReference>
<dbReference type="HAMAP" id="MF_00777">
    <property type="entry name" value="Ribosomal_eS31"/>
    <property type="match status" value="1"/>
</dbReference>
<dbReference type="InterPro" id="IPR002906">
    <property type="entry name" value="Ribosomal_eS31"/>
</dbReference>
<dbReference type="InterPro" id="IPR022845">
    <property type="entry name" value="Ribosomal_eS31_arc"/>
</dbReference>
<dbReference type="InterPro" id="IPR011332">
    <property type="entry name" value="Ribosomal_zn-bd"/>
</dbReference>
<dbReference type="NCBIfam" id="NF001669">
    <property type="entry name" value="PRK00432.1"/>
    <property type="match status" value="1"/>
</dbReference>
<dbReference type="Pfam" id="PF01599">
    <property type="entry name" value="Ribosomal_S27"/>
    <property type="match status" value="1"/>
</dbReference>
<dbReference type="SMART" id="SM01402">
    <property type="entry name" value="Ribosomal_S27"/>
    <property type="match status" value="1"/>
</dbReference>
<dbReference type="SUPFAM" id="SSF57829">
    <property type="entry name" value="Zn-binding ribosomal proteins"/>
    <property type="match status" value="1"/>
</dbReference>
<reference key="1">
    <citation type="submission" date="2007-03" db="EMBL/GenBank/DDBJ databases">
        <title>Complete sequence of chromosome of Methanococcus maripaludis C5.</title>
        <authorList>
            <consortium name="US DOE Joint Genome Institute"/>
            <person name="Copeland A."/>
            <person name="Lucas S."/>
            <person name="Lapidus A."/>
            <person name="Barry K."/>
            <person name="Glavina del Rio T."/>
            <person name="Dalin E."/>
            <person name="Tice H."/>
            <person name="Pitluck S."/>
            <person name="Chertkov O."/>
            <person name="Brettin T."/>
            <person name="Bruce D."/>
            <person name="Han C."/>
            <person name="Detter J.C."/>
            <person name="Schmutz J."/>
            <person name="Larimer F."/>
            <person name="Land M."/>
            <person name="Hauser L."/>
            <person name="Kyrpides N."/>
            <person name="Mikhailova N."/>
            <person name="Sieprawska-Lupa M."/>
            <person name="Whitman W.B."/>
            <person name="Richardson P."/>
        </authorList>
    </citation>
    <scope>NUCLEOTIDE SEQUENCE [LARGE SCALE GENOMIC DNA]</scope>
    <source>
        <strain>C5 / ATCC BAA-1333</strain>
    </source>
</reference>
<name>RS27A_METM5</name>
<organism>
    <name type="scientific">Methanococcus maripaludis (strain C5 / ATCC BAA-1333)</name>
    <dbReference type="NCBI Taxonomy" id="402880"/>
    <lineage>
        <taxon>Archaea</taxon>
        <taxon>Methanobacteriati</taxon>
        <taxon>Methanobacteriota</taxon>
        <taxon>Methanomada group</taxon>
        <taxon>Methanococci</taxon>
        <taxon>Methanococcales</taxon>
        <taxon>Methanococcaceae</taxon>
        <taxon>Methanococcus</taxon>
    </lineage>
</organism>
<proteinExistence type="inferred from homology"/>
<gene>
    <name evidence="1" type="primary">rps27ae</name>
    <name type="ordered locus">MmarC5_1193</name>
</gene>
<evidence type="ECO:0000255" key="1">
    <source>
        <dbReference type="HAMAP-Rule" id="MF_00777"/>
    </source>
</evidence>
<evidence type="ECO:0000305" key="2"/>
<feature type="chain" id="PRO_1000046814" description="Small ribosomal subunit protein eS31">
    <location>
        <begin position="1"/>
        <end position="67"/>
    </location>
</feature>
<feature type="zinc finger region" description="C4-type" evidence="1">
    <location>
        <begin position="31"/>
        <end position="52"/>
    </location>
</feature>
<feature type="binding site" evidence="1">
    <location>
        <position position="31"/>
    </location>
    <ligand>
        <name>Zn(2+)</name>
        <dbReference type="ChEBI" id="CHEBI:29105"/>
    </ligand>
</feature>
<feature type="binding site" evidence="1">
    <location>
        <position position="34"/>
    </location>
    <ligand>
        <name>Zn(2+)</name>
        <dbReference type="ChEBI" id="CHEBI:29105"/>
    </ligand>
</feature>
<feature type="binding site" evidence="1">
    <location>
        <position position="49"/>
    </location>
    <ligand>
        <name>Zn(2+)</name>
        <dbReference type="ChEBI" id="CHEBI:29105"/>
    </ligand>
</feature>
<feature type="binding site" evidence="1">
    <location>
        <position position="52"/>
    </location>
    <ligand>
        <name>Zn(2+)</name>
        <dbReference type="ChEBI" id="CHEBI:29105"/>
    </ligand>
</feature>
<sequence>MAAKKGVKTSTKKSDYYKVEGNTVERLKKACPKCGAGVFMAEHLNRFACGKCGYLEYKKNEKTETEE</sequence>
<protein>
    <recommendedName>
        <fullName evidence="1">Small ribosomal subunit protein eS31</fullName>
    </recommendedName>
    <alternativeName>
        <fullName evidence="2">30S ribosomal protein S27ae</fullName>
    </alternativeName>
</protein>
<comment type="cofactor">
    <cofactor evidence="1">
        <name>Zn(2+)</name>
        <dbReference type="ChEBI" id="CHEBI:29105"/>
    </cofactor>
    <text evidence="1">Binds 1 zinc ion per subunit.</text>
</comment>
<comment type="subunit">
    <text evidence="1">Part of the 30S ribosomal subunit.</text>
</comment>
<comment type="similarity">
    <text evidence="1">Belongs to the eukaryotic ribosomal protein eS31 family.</text>
</comment>
<accession>A4FZ57</accession>
<keyword id="KW-0479">Metal-binding</keyword>
<keyword id="KW-0687">Ribonucleoprotein</keyword>
<keyword id="KW-0689">Ribosomal protein</keyword>
<keyword id="KW-0862">Zinc</keyword>
<keyword id="KW-0863">Zinc-finger</keyword>